<organism>
    <name type="scientific">Yersinia pseudotuberculosis serotype I (strain IP32953)</name>
    <dbReference type="NCBI Taxonomy" id="273123"/>
    <lineage>
        <taxon>Bacteria</taxon>
        <taxon>Pseudomonadati</taxon>
        <taxon>Pseudomonadota</taxon>
        <taxon>Gammaproteobacteria</taxon>
        <taxon>Enterobacterales</taxon>
        <taxon>Yersiniaceae</taxon>
        <taxon>Yersinia</taxon>
    </lineage>
</organism>
<evidence type="ECO:0000255" key="1">
    <source>
        <dbReference type="HAMAP-Rule" id="MF_01004"/>
    </source>
</evidence>
<gene>
    <name evidence="1" type="primary">btuC</name>
    <name type="ordered locus">YPTB2333</name>
</gene>
<reference key="1">
    <citation type="journal article" date="2004" name="Proc. Natl. Acad. Sci. U.S.A.">
        <title>Insights into the evolution of Yersinia pestis through whole-genome comparison with Yersinia pseudotuberculosis.</title>
        <authorList>
            <person name="Chain P.S.G."/>
            <person name="Carniel E."/>
            <person name="Larimer F.W."/>
            <person name="Lamerdin J."/>
            <person name="Stoutland P.O."/>
            <person name="Regala W.M."/>
            <person name="Georgescu A.M."/>
            <person name="Vergez L.M."/>
            <person name="Land M.L."/>
            <person name="Motin V.L."/>
            <person name="Brubaker R.R."/>
            <person name="Fowler J."/>
            <person name="Hinnebusch J."/>
            <person name="Marceau M."/>
            <person name="Medigue C."/>
            <person name="Simonet M."/>
            <person name="Chenal-Francisque V."/>
            <person name="Souza B."/>
            <person name="Dacheux D."/>
            <person name="Elliott J.M."/>
            <person name="Derbise A."/>
            <person name="Hauser L.J."/>
            <person name="Garcia E."/>
        </authorList>
    </citation>
    <scope>NUCLEOTIDE SEQUENCE [LARGE SCALE GENOMIC DNA]</scope>
    <source>
        <strain>IP32953</strain>
    </source>
</reference>
<proteinExistence type="inferred from homology"/>
<keyword id="KW-0997">Cell inner membrane</keyword>
<keyword id="KW-1003">Cell membrane</keyword>
<keyword id="KW-0472">Membrane</keyword>
<keyword id="KW-0812">Transmembrane</keyword>
<keyword id="KW-1133">Transmembrane helix</keyword>
<keyword id="KW-0813">Transport</keyword>
<name>BTUC_YERPS</name>
<dbReference type="EMBL" id="BX936398">
    <property type="protein sequence ID" value="CAH21571.1"/>
    <property type="molecule type" value="Genomic_DNA"/>
</dbReference>
<dbReference type="RefSeq" id="WP_002220283.1">
    <property type="nucleotide sequence ID" value="NZ_CP009712.1"/>
</dbReference>
<dbReference type="SMR" id="Q669Z9"/>
<dbReference type="GeneID" id="57976252"/>
<dbReference type="KEGG" id="ypo:BZ17_121"/>
<dbReference type="KEGG" id="yps:YPTB2333"/>
<dbReference type="PATRIC" id="fig|273123.14.peg.130"/>
<dbReference type="Proteomes" id="UP000001011">
    <property type="component" value="Chromosome"/>
</dbReference>
<dbReference type="GO" id="GO:0005886">
    <property type="term" value="C:plasma membrane"/>
    <property type="evidence" value="ECO:0007669"/>
    <property type="project" value="UniProtKB-SubCell"/>
</dbReference>
<dbReference type="GO" id="GO:0090482">
    <property type="term" value="F:vitamin transmembrane transporter activity"/>
    <property type="evidence" value="ECO:0007669"/>
    <property type="project" value="UniProtKB-UniRule"/>
</dbReference>
<dbReference type="GO" id="GO:0015889">
    <property type="term" value="P:cobalamin transport"/>
    <property type="evidence" value="ECO:0007669"/>
    <property type="project" value="UniProtKB-UniRule"/>
</dbReference>
<dbReference type="CDD" id="cd06550">
    <property type="entry name" value="TM_ABC_iron-siderophores_like"/>
    <property type="match status" value="1"/>
</dbReference>
<dbReference type="FunFam" id="1.10.3470.10:FF:000001">
    <property type="entry name" value="Vitamin B12 ABC transporter permease BtuC"/>
    <property type="match status" value="1"/>
</dbReference>
<dbReference type="Gene3D" id="1.10.3470.10">
    <property type="entry name" value="ABC transporter involved in vitamin B12 uptake, BtuC"/>
    <property type="match status" value="1"/>
</dbReference>
<dbReference type="HAMAP" id="MF_01004">
    <property type="entry name" value="BtuC"/>
    <property type="match status" value="1"/>
</dbReference>
<dbReference type="InterPro" id="IPR037294">
    <property type="entry name" value="ABC_BtuC-like"/>
</dbReference>
<dbReference type="InterPro" id="IPR023691">
    <property type="entry name" value="ABC_transptr_BtuC"/>
</dbReference>
<dbReference type="InterPro" id="IPR000522">
    <property type="entry name" value="ABC_transptr_permease_BtuC"/>
</dbReference>
<dbReference type="NCBIfam" id="NF003001">
    <property type="entry name" value="PRK03784.1"/>
    <property type="match status" value="1"/>
</dbReference>
<dbReference type="PANTHER" id="PTHR30472">
    <property type="entry name" value="FERRIC ENTEROBACTIN TRANSPORT SYSTEM PERMEASE PROTEIN"/>
    <property type="match status" value="1"/>
</dbReference>
<dbReference type="PANTHER" id="PTHR30472:SF29">
    <property type="entry name" value="VITAMIN B12 IMPORT SYSTEM PERMEASE PROTEIN BTUC"/>
    <property type="match status" value="1"/>
</dbReference>
<dbReference type="Pfam" id="PF01032">
    <property type="entry name" value="FecCD"/>
    <property type="match status" value="1"/>
</dbReference>
<dbReference type="SUPFAM" id="SSF81345">
    <property type="entry name" value="ABC transporter involved in vitamin B12 uptake, BtuC"/>
    <property type="match status" value="1"/>
</dbReference>
<accession>Q669Z9</accession>
<protein>
    <recommendedName>
        <fullName evidence="1">Vitamin B12 import system permease protein BtuC</fullName>
    </recommendedName>
</protein>
<feature type="chain" id="PRO_0000059984" description="Vitamin B12 import system permease protein BtuC">
    <location>
        <begin position="1"/>
        <end position="335"/>
    </location>
</feature>
<feature type="transmembrane region" description="Helical" evidence="1">
    <location>
        <begin position="21"/>
        <end position="43"/>
    </location>
</feature>
<feature type="transmembrane region" description="Helical" evidence="1">
    <location>
        <begin position="65"/>
        <end position="87"/>
    </location>
</feature>
<feature type="transmembrane region" description="Helical" evidence="1">
    <location>
        <begin position="94"/>
        <end position="113"/>
    </location>
</feature>
<feature type="transmembrane region" description="Helical" evidence="1">
    <location>
        <begin position="117"/>
        <end position="139"/>
    </location>
</feature>
<feature type="transmembrane region" description="Helical" evidence="1">
    <location>
        <begin position="152"/>
        <end position="174"/>
    </location>
</feature>
<feature type="transmembrane region" description="Helical" evidence="1">
    <location>
        <begin position="241"/>
        <end position="263"/>
    </location>
</feature>
<feature type="transmembrane region" description="Helical" evidence="1">
    <location>
        <begin position="283"/>
        <end position="305"/>
    </location>
</feature>
<feature type="transmembrane region" description="Helical" evidence="1">
    <location>
        <begin position="310"/>
        <end position="329"/>
    </location>
</feature>
<sequence>MQTSQLFTALQQRQRQRDYRYLTGLVVMLLFALLISLCAGDVWIWPEHWFSESGKLFVWQLRLPRSMAVIMVGASLAVSGAVMQALFENPLAEPGLLGVANGAGVALVTAVLLGHGLLPIWVLSTCAIIGALLMTSILLSFTRRRLLTNAQLLLVGVALGIICSAMMTWAVYFSTSLDLRQLMYWMMGGFSGVDWRQQSLVLALLPTVIWLCCQGRVLNFMSLGEQQARQLGVSLHLWRNLLVLAIGLLVGISVALAGVISFIGLVIPHILRLTGLTDQRRLLAGCAFAGGGVLLLADVVARTVLSSAELPIGVVTATLGSPLFIWLLIRVKGVK</sequence>
<comment type="function">
    <text evidence="1">Part of the ABC transporter complex BtuCDF involved in vitamin B12 import. Involved in the translocation of the substrate across the membrane.</text>
</comment>
<comment type="subunit">
    <text evidence="1">The complex is composed of two ATP-binding proteins (BtuD), two transmembrane proteins (BtuC) and a solute-binding protein (BtuF).</text>
</comment>
<comment type="subcellular location">
    <subcellularLocation>
        <location evidence="1">Cell inner membrane</location>
        <topology evidence="1">Multi-pass membrane protein</topology>
    </subcellularLocation>
</comment>
<comment type="similarity">
    <text evidence="1">Belongs to the binding-protein-dependent transport system permease family. FecCD subfamily.</text>
</comment>